<accession>Q4R319</accession>
<organism>
    <name type="scientific">Macaca fascicularis</name>
    <name type="common">Crab-eating macaque</name>
    <name type="synonym">Cynomolgus monkey</name>
    <dbReference type="NCBI Taxonomy" id="9541"/>
    <lineage>
        <taxon>Eukaryota</taxon>
        <taxon>Metazoa</taxon>
        <taxon>Chordata</taxon>
        <taxon>Craniata</taxon>
        <taxon>Vertebrata</taxon>
        <taxon>Euteleostomi</taxon>
        <taxon>Mammalia</taxon>
        <taxon>Eutheria</taxon>
        <taxon>Euarchontoglires</taxon>
        <taxon>Primates</taxon>
        <taxon>Haplorrhini</taxon>
        <taxon>Catarrhini</taxon>
        <taxon>Cercopithecidae</taxon>
        <taxon>Cercopithecinae</taxon>
        <taxon>Macaca</taxon>
    </lineage>
</organism>
<gene>
    <name type="primary">MRPL34</name>
    <name type="ORF">QtsA-20292</name>
</gene>
<reference key="1">
    <citation type="submission" date="2005-06" db="EMBL/GenBank/DDBJ databases">
        <title>DNA sequences of macaque genes expressed in brain or testis and its evolutionary implications.</title>
        <authorList>
            <consortium name="International consortium for macaque cDNA sequencing and analysis"/>
        </authorList>
    </citation>
    <scope>NUCLEOTIDE SEQUENCE [LARGE SCALE MRNA]</scope>
    <source>
        <tissue>Testis</tissue>
    </source>
</reference>
<protein>
    <recommendedName>
        <fullName evidence="4">Large ribosomal subunit protein bL34m</fullName>
    </recommendedName>
    <alternativeName>
        <fullName>39S ribosomal protein L34, mitochondrial</fullName>
        <shortName>L34mt</shortName>
        <shortName>MRP-L34</shortName>
    </alternativeName>
</protein>
<proteinExistence type="inferred from homology"/>
<dbReference type="EMBL" id="AB179449">
    <property type="protein sequence ID" value="BAE02500.1"/>
    <property type="molecule type" value="mRNA"/>
</dbReference>
<dbReference type="SMR" id="Q4R319"/>
<dbReference type="STRING" id="9541.ENSMFAP00000025197"/>
<dbReference type="eggNOG" id="KOG4612">
    <property type="taxonomic scope" value="Eukaryota"/>
</dbReference>
<dbReference type="Proteomes" id="UP000233100">
    <property type="component" value="Unplaced"/>
</dbReference>
<dbReference type="GO" id="GO:0005762">
    <property type="term" value="C:mitochondrial large ribosomal subunit"/>
    <property type="evidence" value="ECO:0000250"/>
    <property type="project" value="UniProtKB"/>
</dbReference>
<dbReference type="GO" id="GO:0003735">
    <property type="term" value="F:structural constituent of ribosome"/>
    <property type="evidence" value="ECO:0007669"/>
    <property type="project" value="InterPro"/>
</dbReference>
<dbReference type="GO" id="GO:0006412">
    <property type="term" value="P:translation"/>
    <property type="evidence" value="ECO:0007669"/>
    <property type="project" value="InterPro"/>
</dbReference>
<dbReference type="FunFam" id="1.10.287.3980:FF:000001">
    <property type="entry name" value="Mitochondrial ribosomal protein L34"/>
    <property type="match status" value="1"/>
</dbReference>
<dbReference type="Gene3D" id="1.10.287.3980">
    <property type="match status" value="1"/>
</dbReference>
<dbReference type="InterPro" id="IPR000271">
    <property type="entry name" value="Ribosomal_bL34"/>
</dbReference>
<dbReference type="NCBIfam" id="TIGR01030">
    <property type="entry name" value="rpmH_bact"/>
    <property type="match status" value="1"/>
</dbReference>
<dbReference type="PANTHER" id="PTHR14503:SF4">
    <property type="entry name" value="LARGE RIBOSOMAL SUBUNIT PROTEIN BL34M"/>
    <property type="match status" value="1"/>
</dbReference>
<dbReference type="PANTHER" id="PTHR14503">
    <property type="entry name" value="MITOCHONDRIAL RIBOSOMAL PROTEIN 34 FAMILY MEMBER"/>
    <property type="match status" value="1"/>
</dbReference>
<dbReference type="Pfam" id="PF00468">
    <property type="entry name" value="Ribosomal_L34"/>
    <property type="match status" value="1"/>
</dbReference>
<name>RM34_MACFA</name>
<evidence type="ECO:0000250" key="1">
    <source>
        <dbReference type="UniProtKB" id="A8NN94"/>
    </source>
</evidence>
<evidence type="ECO:0000250" key="2">
    <source>
        <dbReference type="UniProtKB" id="Q9BQ48"/>
    </source>
</evidence>
<evidence type="ECO:0000256" key="3">
    <source>
        <dbReference type="SAM" id="MobiDB-lite"/>
    </source>
</evidence>
<evidence type="ECO:0000305" key="4"/>
<feature type="transit peptide" description="Mitochondrion" evidence="1">
    <location>
        <begin position="1"/>
        <end position="46"/>
    </location>
</feature>
<feature type="chain" id="PRO_0000319295" description="Large ribosomal subunit protein bL34m">
    <location>
        <begin position="47"/>
        <end position="92"/>
    </location>
</feature>
<feature type="region of interest" description="Disordered" evidence="3">
    <location>
        <begin position="40"/>
        <end position="63"/>
    </location>
</feature>
<feature type="compositionally biased region" description="Polar residues" evidence="3">
    <location>
        <begin position="40"/>
        <end position="57"/>
    </location>
</feature>
<feature type="modified residue" description="Phosphoserine" evidence="2">
    <location>
        <position position="71"/>
    </location>
</feature>
<keyword id="KW-0496">Mitochondrion</keyword>
<keyword id="KW-0597">Phosphoprotein</keyword>
<keyword id="KW-1185">Reference proteome</keyword>
<keyword id="KW-0687">Ribonucleoprotein</keyword>
<keyword id="KW-0689">Ribosomal protein</keyword>
<keyword id="KW-0809">Transit peptide</keyword>
<sequence length="92" mass="10195">MALLAGSLLGPTSRSAALLGGRWLQPRAWLGFPDAWGLPTPQQARGKSRGNEYQPSNIKRKNKHGWVRRLSTPAGVQVILRRMLKGRKSLSH</sequence>
<comment type="subunit">
    <text evidence="2">Component of the mitochondrial ribosome large subunit (39S) which comprises a 16S rRNA and about 50 distinct proteins.</text>
</comment>
<comment type="subcellular location">
    <subcellularLocation>
        <location evidence="2">Mitochondrion</location>
    </subcellularLocation>
</comment>
<comment type="similarity">
    <text evidence="4">Belongs to the bacterial ribosomal protein bL34 family.</text>
</comment>